<comment type="function">
    <text evidence="1">Peptide chain release factor 1 directs the termination of translation in response to the peptide chain termination codons UAG and UAA.</text>
</comment>
<comment type="subcellular location">
    <subcellularLocation>
        <location evidence="1">Cytoplasm</location>
    </subcellularLocation>
</comment>
<comment type="PTM">
    <text evidence="1">Methylated by PrmC. Methylation increases the termination efficiency of RF1.</text>
</comment>
<comment type="similarity">
    <text evidence="1">Belongs to the prokaryotic/mitochondrial release factor family.</text>
</comment>
<protein>
    <recommendedName>
        <fullName evidence="1">Peptide chain release factor 1</fullName>
        <shortName evidence="1">RF-1</shortName>
    </recommendedName>
</protein>
<gene>
    <name evidence="1" type="primary">prfA</name>
    <name type="ordered locus">SAV2118</name>
</gene>
<name>RF1_STAAM</name>
<proteinExistence type="inferred from homology"/>
<dbReference type="EMBL" id="BA000017">
    <property type="protein sequence ID" value="BAB58280.1"/>
    <property type="molecule type" value="Genomic_DNA"/>
</dbReference>
<dbReference type="RefSeq" id="WP_000460242.1">
    <property type="nucleotide sequence ID" value="NC_002758.2"/>
</dbReference>
<dbReference type="SMR" id="P66018"/>
<dbReference type="KEGG" id="sav:SAV2118"/>
<dbReference type="HOGENOM" id="CLU_036856_0_1_9"/>
<dbReference type="PhylomeDB" id="P66018"/>
<dbReference type="Proteomes" id="UP000002481">
    <property type="component" value="Chromosome"/>
</dbReference>
<dbReference type="GO" id="GO:0005737">
    <property type="term" value="C:cytoplasm"/>
    <property type="evidence" value="ECO:0007669"/>
    <property type="project" value="UniProtKB-SubCell"/>
</dbReference>
<dbReference type="GO" id="GO:0016149">
    <property type="term" value="F:translation release factor activity, codon specific"/>
    <property type="evidence" value="ECO:0007669"/>
    <property type="project" value="UniProtKB-UniRule"/>
</dbReference>
<dbReference type="FunFam" id="3.30.160.20:FF:000004">
    <property type="entry name" value="Peptide chain release factor 1"/>
    <property type="match status" value="1"/>
</dbReference>
<dbReference type="FunFam" id="3.30.70.1660:FF:000002">
    <property type="entry name" value="Peptide chain release factor 1"/>
    <property type="match status" value="1"/>
</dbReference>
<dbReference type="FunFam" id="3.30.70.1660:FF:000004">
    <property type="entry name" value="Peptide chain release factor 1"/>
    <property type="match status" value="1"/>
</dbReference>
<dbReference type="Gene3D" id="3.30.160.20">
    <property type="match status" value="1"/>
</dbReference>
<dbReference type="Gene3D" id="3.30.70.1660">
    <property type="match status" value="1"/>
</dbReference>
<dbReference type="Gene3D" id="6.10.140.1950">
    <property type="match status" value="1"/>
</dbReference>
<dbReference type="HAMAP" id="MF_00093">
    <property type="entry name" value="Rel_fac_1"/>
    <property type="match status" value="1"/>
</dbReference>
<dbReference type="InterPro" id="IPR005139">
    <property type="entry name" value="PCRF"/>
</dbReference>
<dbReference type="InterPro" id="IPR000352">
    <property type="entry name" value="Pep_chain_release_fac_I"/>
</dbReference>
<dbReference type="InterPro" id="IPR045853">
    <property type="entry name" value="Pep_chain_release_fac_I_sf"/>
</dbReference>
<dbReference type="InterPro" id="IPR050057">
    <property type="entry name" value="Prokaryotic/Mito_RF"/>
</dbReference>
<dbReference type="InterPro" id="IPR004373">
    <property type="entry name" value="RF-1"/>
</dbReference>
<dbReference type="NCBIfam" id="TIGR00019">
    <property type="entry name" value="prfA"/>
    <property type="match status" value="1"/>
</dbReference>
<dbReference type="NCBIfam" id="NF001859">
    <property type="entry name" value="PRK00591.1"/>
    <property type="match status" value="1"/>
</dbReference>
<dbReference type="PANTHER" id="PTHR43804">
    <property type="entry name" value="LD18447P"/>
    <property type="match status" value="1"/>
</dbReference>
<dbReference type="PANTHER" id="PTHR43804:SF7">
    <property type="entry name" value="LD18447P"/>
    <property type="match status" value="1"/>
</dbReference>
<dbReference type="Pfam" id="PF03462">
    <property type="entry name" value="PCRF"/>
    <property type="match status" value="1"/>
</dbReference>
<dbReference type="Pfam" id="PF00472">
    <property type="entry name" value="RF-1"/>
    <property type="match status" value="1"/>
</dbReference>
<dbReference type="SMART" id="SM00937">
    <property type="entry name" value="PCRF"/>
    <property type="match status" value="1"/>
</dbReference>
<dbReference type="SUPFAM" id="SSF75620">
    <property type="entry name" value="Release factor"/>
    <property type="match status" value="1"/>
</dbReference>
<dbReference type="PROSITE" id="PS00745">
    <property type="entry name" value="RF_PROK_I"/>
    <property type="match status" value="1"/>
</dbReference>
<feature type="chain" id="PRO_0000177738" description="Peptide chain release factor 1">
    <location>
        <begin position="1"/>
        <end position="358"/>
    </location>
</feature>
<feature type="modified residue" description="N5-methylglutamine" evidence="1">
    <location>
        <position position="233"/>
    </location>
</feature>
<sequence>MFDQLDIVEERYEQLNELLSDPDVVNDSDKLRKYSKEQADLQKTVDVYRNYKAKKEELADIEEMLSETDDKEEVEMLKEESNGIKAELPNLEEELKILLIPKDPNDDKDVIVEIRAAAGGDEAAIFAGDLMRMYSKYAESQGFKTEIVEASESDHGGYKEISFSVSGNGAYSKLKFENGAHRVQRVPETESGGRIHTSTATVAVLPEVEDVEIEIRNEDLKIDTYRSSGAGGQHVNTTDSAVRITHLPTGVIATSSEKSQIQNREKAMKVLKARLYDMKVQEEQQKYASQRKSAVGTGDRSERIRTYNYPQSRVTDHRIGLTLQKLGQIMEGHLEEIIDALTLSEQTDKLKELNNGEL</sequence>
<keyword id="KW-0963">Cytoplasm</keyword>
<keyword id="KW-0488">Methylation</keyword>
<keyword id="KW-0648">Protein biosynthesis</keyword>
<organism>
    <name type="scientific">Staphylococcus aureus (strain Mu50 / ATCC 700699)</name>
    <dbReference type="NCBI Taxonomy" id="158878"/>
    <lineage>
        <taxon>Bacteria</taxon>
        <taxon>Bacillati</taxon>
        <taxon>Bacillota</taxon>
        <taxon>Bacilli</taxon>
        <taxon>Bacillales</taxon>
        <taxon>Staphylococcaceae</taxon>
        <taxon>Staphylococcus</taxon>
    </lineage>
</organism>
<accession>P66018</accession>
<accession>Q99SE0</accession>
<evidence type="ECO:0000255" key="1">
    <source>
        <dbReference type="HAMAP-Rule" id="MF_00093"/>
    </source>
</evidence>
<reference key="1">
    <citation type="journal article" date="2001" name="Lancet">
        <title>Whole genome sequencing of meticillin-resistant Staphylococcus aureus.</title>
        <authorList>
            <person name="Kuroda M."/>
            <person name="Ohta T."/>
            <person name="Uchiyama I."/>
            <person name="Baba T."/>
            <person name="Yuzawa H."/>
            <person name="Kobayashi I."/>
            <person name="Cui L."/>
            <person name="Oguchi A."/>
            <person name="Aoki K."/>
            <person name="Nagai Y."/>
            <person name="Lian J.-Q."/>
            <person name="Ito T."/>
            <person name="Kanamori M."/>
            <person name="Matsumaru H."/>
            <person name="Maruyama A."/>
            <person name="Murakami H."/>
            <person name="Hosoyama A."/>
            <person name="Mizutani-Ui Y."/>
            <person name="Takahashi N.K."/>
            <person name="Sawano T."/>
            <person name="Inoue R."/>
            <person name="Kaito C."/>
            <person name="Sekimizu K."/>
            <person name="Hirakawa H."/>
            <person name="Kuhara S."/>
            <person name="Goto S."/>
            <person name="Yabuzaki J."/>
            <person name="Kanehisa M."/>
            <person name="Yamashita A."/>
            <person name="Oshima K."/>
            <person name="Furuya K."/>
            <person name="Yoshino C."/>
            <person name="Shiba T."/>
            <person name="Hattori M."/>
            <person name="Ogasawara N."/>
            <person name="Hayashi H."/>
            <person name="Hiramatsu K."/>
        </authorList>
    </citation>
    <scope>NUCLEOTIDE SEQUENCE [LARGE SCALE GENOMIC DNA]</scope>
    <source>
        <strain>Mu50 / ATCC 700699</strain>
    </source>
</reference>